<comment type="function">
    <text evidence="2">Cell wall formation.</text>
</comment>
<comment type="catalytic activity">
    <reaction evidence="2">
        <text>2 D-alanine + ATP = D-alanyl-D-alanine + ADP + phosphate + H(+)</text>
        <dbReference type="Rhea" id="RHEA:11224"/>
        <dbReference type="ChEBI" id="CHEBI:15378"/>
        <dbReference type="ChEBI" id="CHEBI:30616"/>
        <dbReference type="ChEBI" id="CHEBI:43474"/>
        <dbReference type="ChEBI" id="CHEBI:57416"/>
        <dbReference type="ChEBI" id="CHEBI:57822"/>
        <dbReference type="ChEBI" id="CHEBI:456216"/>
        <dbReference type="EC" id="6.3.2.4"/>
    </reaction>
</comment>
<comment type="cofactor">
    <cofactor evidence="1">
        <name>Mg(2+)</name>
        <dbReference type="ChEBI" id="CHEBI:18420"/>
    </cofactor>
    <cofactor evidence="1">
        <name>Mn(2+)</name>
        <dbReference type="ChEBI" id="CHEBI:29035"/>
    </cofactor>
    <text evidence="1">Binds 2 magnesium or manganese ions per subunit.</text>
</comment>
<comment type="pathway">
    <text evidence="2">Cell wall biogenesis; peptidoglycan biosynthesis.</text>
</comment>
<comment type="subcellular location">
    <subcellularLocation>
        <location evidence="2">Cytoplasm</location>
    </subcellularLocation>
</comment>
<comment type="similarity">
    <text evidence="2">Belongs to the D-alanine--D-alanine ligase family.</text>
</comment>
<protein>
    <recommendedName>
        <fullName evidence="2">D-alanine--D-alanine ligase</fullName>
        <ecNumber evidence="2">6.3.2.4</ecNumber>
    </recommendedName>
    <alternativeName>
        <fullName evidence="2">D-Ala-D-Ala ligase</fullName>
    </alternativeName>
    <alternativeName>
        <fullName evidence="2">D-alanylalanine synthetase</fullName>
    </alternativeName>
</protein>
<dbReference type="EC" id="6.3.2.4" evidence="2"/>
<dbReference type="EMBL" id="AP008231">
    <property type="protein sequence ID" value="BAD79920.1"/>
    <property type="molecule type" value="Genomic_DNA"/>
</dbReference>
<dbReference type="RefSeq" id="WP_011244040.1">
    <property type="nucleotide sequence ID" value="NZ_CP085785.1"/>
</dbReference>
<dbReference type="SMR" id="Q5N1A0"/>
<dbReference type="KEGG" id="syc:syc1730_c"/>
<dbReference type="eggNOG" id="COG1181">
    <property type="taxonomic scope" value="Bacteria"/>
</dbReference>
<dbReference type="UniPathway" id="UPA00219"/>
<dbReference type="Proteomes" id="UP000001175">
    <property type="component" value="Chromosome"/>
</dbReference>
<dbReference type="GO" id="GO:0005829">
    <property type="term" value="C:cytosol"/>
    <property type="evidence" value="ECO:0007669"/>
    <property type="project" value="TreeGrafter"/>
</dbReference>
<dbReference type="GO" id="GO:0005524">
    <property type="term" value="F:ATP binding"/>
    <property type="evidence" value="ECO:0007669"/>
    <property type="project" value="UniProtKB-KW"/>
</dbReference>
<dbReference type="GO" id="GO:0008716">
    <property type="term" value="F:D-alanine-D-alanine ligase activity"/>
    <property type="evidence" value="ECO:0007669"/>
    <property type="project" value="UniProtKB-UniRule"/>
</dbReference>
<dbReference type="GO" id="GO:0046872">
    <property type="term" value="F:metal ion binding"/>
    <property type="evidence" value="ECO:0007669"/>
    <property type="project" value="UniProtKB-KW"/>
</dbReference>
<dbReference type="GO" id="GO:0071555">
    <property type="term" value="P:cell wall organization"/>
    <property type="evidence" value="ECO:0007669"/>
    <property type="project" value="UniProtKB-KW"/>
</dbReference>
<dbReference type="GO" id="GO:0009252">
    <property type="term" value="P:peptidoglycan biosynthetic process"/>
    <property type="evidence" value="ECO:0007669"/>
    <property type="project" value="UniProtKB-UniRule"/>
</dbReference>
<dbReference type="GO" id="GO:0008360">
    <property type="term" value="P:regulation of cell shape"/>
    <property type="evidence" value="ECO:0007669"/>
    <property type="project" value="UniProtKB-KW"/>
</dbReference>
<dbReference type="FunFam" id="3.30.1490.20:FF:000007">
    <property type="entry name" value="D-alanine--D-alanine ligase"/>
    <property type="match status" value="1"/>
</dbReference>
<dbReference type="FunFam" id="3.30.470.20:FF:000008">
    <property type="entry name" value="D-alanine--D-alanine ligase"/>
    <property type="match status" value="1"/>
</dbReference>
<dbReference type="Gene3D" id="3.40.50.20">
    <property type="match status" value="1"/>
</dbReference>
<dbReference type="Gene3D" id="3.30.1490.20">
    <property type="entry name" value="ATP-grasp fold, A domain"/>
    <property type="match status" value="1"/>
</dbReference>
<dbReference type="Gene3D" id="3.30.470.20">
    <property type="entry name" value="ATP-grasp fold, B domain"/>
    <property type="match status" value="1"/>
</dbReference>
<dbReference type="HAMAP" id="MF_00047">
    <property type="entry name" value="Dala_Dala_lig"/>
    <property type="match status" value="1"/>
</dbReference>
<dbReference type="InterPro" id="IPR011761">
    <property type="entry name" value="ATP-grasp"/>
</dbReference>
<dbReference type="InterPro" id="IPR013815">
    <property type="entry name" value="ATP_grasp_subdomain_1"/>
</dbReference>
<dbReference type="InterPro" id="IPR000291">
    <property type="entry name" value="D-Ala_lig_Van_CS"/>
</dbReference>
<dbReference type="InterPro" id="IPR005905">
    <property type="entry name" value="D_ala_D_ala"/>
</dbReference>
<dbReference type="InterPro" id="IPR011095">
    <property type="entry name" value="Dala_Dala_lig_C"/>
</dbReference>
<dbReference type="InterPro" id="IPR011127">
    <property type="entry name" value="Dala_Dala_lig_N"/>
</dbReference>
<dbReference type="InterPro" id="IPR016185">
    <property type="entry name" value="PreATP-grasp_dom_sf"/>
</dbReference>
<dbReference type="NCBIfam" id="TIGR01205">
    <property type="entry name" value="D_ala_D_alaTIGR"/>
    <property type="match status" value="1"/>
</dbReference>
<dbReference type="NCBIfam" id="NF002378">
    <property type="entry name" value="PRK01372.1"/>
    <property type="match status" value="1"/>
</dbReference>
<dbReference type="NCBIfam" id="NF002528">
    <property type="entry name" value="PRK01966.1-4"/>
    <property type="match status" value="1"/>
</dbReference>
<dbReference type="PANTHER" id="PTHR23132">
    <property type="entry name" value="D-ALANINE--D-ALANINE LIGASE"/>
    <property type="match status" value="1"/>
</dbReference>
<dbReference type="PANTHER" id="PTHR23132:SF25">
    <property type="entry name" value="D-ALANINE--D-ALANINE LIGASE A"/>
    <property type="match status" value="1"/>
</dbReference>
<dbReference type="Pfam" id="PF07478">
    <property type="entry name" value="Dala_Dala_lig_C"/>
    <property type="match status" value="1"/>
</dbReference>
<dbReference type="Pfam" id="PF01820">
    <property type="entry name" value="Dala_Dala_lig_N"/>
    <property type="match status" value="1"/>
</dbReference>
<dbReference type="PIRSF" id="PIRSF039102">
    <property type="entry name" value="Ddl/VanB"/>
    <property type="match status" value="1"/>
</dbReference>
<dbReference type="SUPFAM" id="SSF56059">
    <property type="entry name" value="Glutathione synthetase ATP-binding domain-like"/>
    <property type="match status" value="1"/>
</dbReference>
<dbReference type="SUPFAM" id="SSF52440">
    <property type="entry name" value="PreATP-grasp domain"/>
    <property type="match status" value="1"/>
</dbReference>
<dbReference type="PROSITE" id="PS50975">
    <property type="entry name" value="ATP_GRASP"/>
    <property type="match status" value="1"/>
</dbReference>
<dbReference type="PROSITE" id="PS00843">
    <property type="entry name" value="DALA_DALA_LIGASE_1"/>
    <property type="match status" value="1"/>
</dbReference>
<dbReference type="PROSITE" id="PS00844">
    <property type="entry name" value="DALA_DALA_LIGASE_2"/>
    <property type="match status" value="1"/>
</dbReference>
<proteinExistence type="inferred from homology"/>
<name>DDL_SYNP6</name>
<accession>Q5N1A0</accession>
<reference key="1">
    <citation type="journal article" date="2007" name="Photosyn. Res.">
        <title>Complete nucleotide sequence of the freshwater unicellular cyanobacterium Synechococcus elongatus PCC 6301 chromosome: gene content and organization.</title>
        <authorList>
            <person name="Sugita C."/>
            <person name="Ogata K."/>
            <person name="Shikata M."/>
            <person name="Jikuya H."/>
            <person name="Takano J."/>
            <person name="Furumichi M."/>
            <person name="Kanehisa M."/>
            <person name="Omata T."/>
            <person name="Sugiura M."/>
            <person name="Sugita M."/>
        </authorList>
    </citation>
    <scope>NUCLEOTIDE SEQUENCE [LARGE SCALE GENOMIC DNA]</scope>
    <source>
        <strain>ATCC 27144 / PCC 6301 / SAUG 1402/1</strain>
    </source>
</reference>
<evidence type="ECO:0000250" key="1"/>
<evidence type="ECO:0000255" key="2">
    <source>
        <dbReference type="HAMAP-Rule" id="MF_00047"/>
    </source>
</evidence>
<gene>
    <name evidence="2" type="primary">ddl</name>
    <name type="ordered locus">syc1730_c</name>
</gene>
<feature type="chain" id="PRO_1000030511" description="D-alanine--D-alanine ligase">
    <location>
        <begin position="1"/>
        <end position="347"/>
    </location>
</feature>
<feature type="domain" description="ATP-grasp" evidence="2">
    <location>
        <begin position="133"/>
        <end position="342"/>
    </location>
</feature>
<feature type="binding site" evidence="2">
    <location>
        <begin position="169"/>
        <end position="224"/>
    </location>
    <ligand>
        <name>ATP</name>
        <dbReference type="ChEBI" id="CHEBI:30616"/>
    </ligand>
</feature>
<feature type="binding site" evidence="2">
    <location>
        <position position="296"/>
    </location>
    <ligand>
        <name>Mg(2+)</name>
        <dbReference type="ChEBI" id="CHEBI:18420"/>
        <label>1</label>
    </ligand>
</feature>
<feature type="binding site" evidence="2">
    <location>
        <position position="309"/>
    </location>
    <ligand>
        <name>Mg(2+)</name>
        <dbReference type="ChEBI" id="CHEBI:18420"/>
        <label>1</label>
    </ligand>
</feature>
<feature type="binding site" evidence="2">
    <location>
        <position position="309"/>
    </location>
    <ligand>
        <name>Mg(2+)</name>
        <dbReference type="ChEBI" id="CHEBI:18420"/>
        <label>2</label>
    </ligand>
</feature>
<feature type="binding site" evidence="2">
    <location>
        <position position="311"/>
    </location>
    <ligand>
        <name>Mg(2+)</name>
        <dbReference type="ChEBI" id="CHEBI:18420"/>
        <label>2</label>
    </ligand>
</feature>
<organism>
    <name type="scientific">Synechococcus sp. (strain ATCC 27144 / PCC 6301 / SAUG 1402/1)</name>
    <name type="common">Anacystis nidulans</name>
    <dbReference type="NCBI Taxonomy" id="269084"/>
    <lineage>
        <taxon>Bacteria</taxon>
        <taxon>Bacillati</taxon>
        <taxon>Cyanobacteriota</taxon>
        <taxon>Cyanophyceae</taxon>
        <taxon>Synechococcales</taxon>
        <taxon>Synechococcaceae</taxon>
        <taxon>Synechococcus</taxon>
    </lineage>
</organism>
<keyword id="KW-0067">ATP-binding</keyword>
<keyword id="KW-0133">Cell shape</keyword>
<keyword id="KW-0961">Cell wall biogenesis/degradation</keyword>
<keyword id="KW-0963">Cytoplasm</keyword>
<keyword id="KW-0436">Ligase</keyword>
<keyword id="KW-0460">Magnesium</keyword>
<keyword id="KW-0464">Manganese</keyword>
<keyword id="KW-0479">Metal-binding</keyword>
<keyword id="KW-0547">Nucleotide-binding</keyword>
<keyword id="KW-0573">Peptidoglycan synthesis</keyword>
<sequence>MAAQKVGLLFGGRSGEHEVSIRSAAAIASALADPSNRDRYQVLPFYIDKEGGWHSGETAAQVLANQKPLFVEEPSDRWQFPADCRDVEVWFPILHGPNGEDGTIQGLLTLMQRPFVGSGVLGSALGMDKIAMKQAFAQASLPQVAYVAVNRSQVFSDPCRYTSLLEQIETELGYPCFVKPANLGSSVGIAKVRDRAELEAALDQAAALDRRLIIEAAIDNPREVECAVLGNDYPQASILGEITYDSDFYDYETKYTDGKAQLLIPAQLSAELQQKLQELAIAAFQAVDASGLSRLDFFLDSQGQIFINEINTLPGFTALSMYPQLWAASGVAFPDLVHRLIQLALER</sequence>